<proteinExistence type="predicted"/>
<protein>
    <recommendedName>
        <fullName>Uncharacterized HTH-type transcriptional regulator y4dJ</fullName>
    </recommendedName>
</protein>
<geneLocation type="plasmid">
    <name>sym pNGR234a</name>
</geneLocation>
<sequence length="77" mass="8726">MDMRKLVGSNFARLRREKGLTQEEVEARSGFSQQYLSSLERGRRNPTVITLYELAQALGVSHVELVTPTDETPFGTR</sequence>
<reference key="1">
    <citation type="journal article" date="1997" name="Nature">
        <title>Molecular basis of symbiosis between Rhizobium and legumes.</title>
        <authorList>
            <person name="Freiberg C.A."/>
            <person name="Fellay R."/>
            <person name="Bairoch A."/>
            <person name="Broughton W.J."/>
            <person name="Rosenthal A."/>
            <person name="Perret X."/>
        </authorList>
    </citation>
    <scope>NUCLEOTIDE SEQUENCE [LARGE SCALE GENOMIC DNA]</scope>
    <source>
        <strain>NBRC 101917 / NGR234</strain>
    </source>
</reference>
<reference key="2">
    <citation type="journal article" date="2009" name="Appl. Environ. Microbiol.">
        <title>Rhizobium sp. strain NGR234 possesses a remarkable number of secretion systems.</title>
        <authorList>
            <person name="Schmeisser C."/>
            <person name="Liesegang H."/>
            <person name="Krysciak D."/>
            <person name="Bakkou N."/>
            <person name="Le Quere A."/>
            <person name="Wollherr A."/>
            <person name="Heinemeyer I."/>
            <person name="Morgenstern B."/>
            <person name="Pommerening-Roeser A."/>
            <person name="Flores M."/>
            <person name="Palacios R."/>
            <person name="Brenner S."/>
            <person name="Gottschalk G."/>
            <person name="Schmitz R.A."/>
            <person name="Broughton W.J."/>
            <person name="Perret X."/>
            <person name="Strittmatter A.W."/>
            <person name="Streit W.R."/>
        </authorList>
    </citation>
    <scope>NUCLEOTIDE SEQUENCE [LARGE SCALE GENOMIC DNA]</scope>
    <source>
        <strain>NBRC 101917 / NGR234</strain>
    </source>
</reference>
<keyword id="KW-0238">DNA-binding</keyword>
<keyword id="KW-0614">Plasmid</keyword>
<keyword id="KW-1185">Reference proteome</keyword>
<keyword id="KW-0804">Transcription</keyword>
<keyword id="KW-0805">Transcription regulation</keyword>
<evidence type="ECO:0000255" key="1">
    <source>
        <dbReference type="PROSITE-ProRule" id="PRU00257"/>
    </source>
</evidence>
<organism>
    <name type="scientific">Sinorhizobium fredii (strain NBRC 101917 / NGR234)</name>
    <dbReference type="NCBI Taxonomy" id="394"/>
    <lineage>
        <taxon>Bacteria</taxon>
        <taxon>Pseudomonadati</taxon>
        <taxon>Pseudomonadota</taxon>
        <taxon>Alphaproteobacteria</taxon>
        <taxon>Hyphomicrobiales</taxon>
        <taxon>Rhizobiaceae</taxon>
        <taxon>Sinorhizobium/Ensifer group</taxon>
        <taxon>Sinorhizobium</taxon>
    </lineage>
</organism>
<gene>
    <name type="ordered locus">NGR_a04070</name>
    <name type="ORF">y4dJ</name>
</gene>
<dbReference type="EMBL" id="U00090">
    <property type="protein sequence ID" value="AAB91639.1"/>
    <property type="molecule type" value="Genomic_DNA"/>
</dbReference>
<dbReference type="RefSeq" id="NP_443819.1">
    <property type="nucleotide sequence ID" value="NC_000914.2"/>
</dbReference>
<dbReference type="RefSeq" id="WP_010875417.1">
    <property type="nucleotide sequence ID" value="NC_000914.2"/>
</dbReference>
<dbReference type="SMR" id="P55409"/>
<dbReference type="KEGG" id="rhi:NGR_a04070"/>
<dbReference type="PATRIC" id="fig|394.7.peg.428"/>
<dbReference type="eggNOG" id="COG1476">
    <property type="taxonomic scope" value="Bacteria"/>
</dbReference>
<dbReference type="HOGENOM" id="CLU_066192_29_1_5"/>
<dbReference type="OrthoDB" id="9815697at2"/>
<dbReference type="Proteomes" id="UP000001054">
    <property type="component" value="Plasmid pNGR234a"/>
</dbReference>
<dbReference type="GO" id="GO:0005829">
    <property type="term" value="C:cytosol"/>
    <property type="evidence" value="ECO:0007669"/>
    <property type="project" value="TreeGrafter"/>
</dbReference>
<dbReference type="GO" id="GO:0003677">
    <property type="term" value="F:DNA binding"/>
    <property type="evidence" value="ECO:0007669"/>
    <property type="project" value="UniProtKB-KW"/>
</dbReference>
<dbReference type="GO" id="GO:0003700">
    <property type="term" value="F:DNA-binding transcription factor activity"/>
    <property type="evidence" value="ECO:0007669"/>
    <property type="project" value="TreeGrafter"/>
</dbReference>
<dbReference type="CDD" id="cd00093">
    <property type="entry name" value="HTH_XRE"/>
    <property type="match status" value="1"/>
</dbReference>
<dbReference type="Gene3D" id="1.10.260.40">
    <property type="entry name" value="lambda repressor-like DNA-binding domains"/>
    <property type="match status" value="1"/>
</dbReference>
<dbReference type="InterPro" id="IPR050807">
    <property type="entry name" value="Bact_TransReg_Diox"/>
</dbReference>
<dbReference type="InterPro" id="IPR001387">
    <property type="entry name" value="Cro/C1-type_HTH"/>
</dbReference>
<dbReference type="InterPro" id="IPR010982">
    <property type="entry name" value="Lambda_DNA-bd_dom_sf"/>
</dbReference>
<dbReference type="PANTHER" id="PTHR46797">
    <property type="entry name" value="HTH-TYPE TRANSCRIPTIONAL REGULATOR"/>
    <property type="match status" value="1"/>
</dbReference>
<dbReference type="PANTHER" id="PTHR46797:SF23">
    <property type="entry name" value="HTH-TYPE TRANSCRIPTIONAL REGULATOR SUTR"/>
    <property type="match status" value="1"/>
</dbReference>
<dbReference type="Pfam" id="PF01381">
    <property type="entry name" value="HTH_3"/>
    <property type="match status" value="1"/>
</dbReference>
<dbReference type="SMART" id="SM00530">
    <property type="entry name" value="HTH_XRE"/>
    <property type="match status" value="1"/>
</dbReference>
<dbReference type="SUPFAM" id="SSF47413">
    <property type="entry name" value="lambda repressor-like DNA-binding domains"/>
    <property type="match status" value="1"/>
</dbReference>
<dbReference type="PROSITE" id="PS50943">
    <property type="entry name" value="HTH_CROC1"/>
    <property type="match status" value="1"/>
</dbReference>
<name>Y4DJ_SINFN</name>
<accession>P55409</accession>
<feature type="chain" id="PRO_0000149776" description="Uncharacterized HTH-type transcriptional regulator y4dJ">
    <location>
        <begin position="1"/>
        <end position="77"/>
    </location>
</feature>
<feature type="domain" description="HTH cro/C1-type" evidence="1">
    <location>
        <begin position="11"/>
        <end position="65"/>
    </location>
</feature>
<feature type="DNA-binding region" description="H-T-H motif" evidence="1">
    <location>
        <begin position="22"/>
        <end position="41"/>
    </location>
</feature>